<proteinExistence type="inferred from homology"/>
<sequence>MMSISLNLTMAFLLALAGVLIYRSHLMSTLLCLEGMMLSLFILMALLISHFHMFSASMAPLILLVFSACEAGVGLALLVKTSNNYGNDYVQNLNLLQC</sequence>
<accession>P92667</accession>
<name>NU4LM_OSPRO</name>
<comment type="function">
    <text evidence="1">Core subunit of the mitochondrial membrane respiratory chain NADH dehydrogenase (Complex I) which catalyzes electron transfer from NADH through the respiratory chain, using ubiquinone as an electron acceptor. Part of the enzyme membrane arm which is embedded in the lipid bilayer and involved in proton translocation.</text>
</comment>
<comment type="catalytic activity">
    <reaction evidence="1">
        <text>a ubiquinone + NADH + 5 H(+)(in) = a ubiquinol + NAD(+) + 4 H(+)(out)</text>
        <dbReference type="Rhea" id="RHEA:29091"/>
        <dbReference type="Rhea" id="RHEA-COMP:9565"/>
        <dbReference type="Rhea" id="RHEA-COMP:9566"/>
        <dbReference type="ChEBI" id="CHEBI:15378"/>
        <dbReference type="ChEBI" id="CHEBI:16389"/>
        <dbReference type="ChEBI" id="CHEBI:17976"/>
        <dbReference type="ChEBI" id="CHEBI:57540"/>
        <dbReference type="ChEBI" id="CHEBI:57945"/>
        <dbReference type="EC" id="7.1.1.2"/>
    </reaction>
    <physiologicalReaction direction="left-to-right" evidence="1">
        <dbReference type="Rhea" id="RHEA:29092"/>
    </physiologicalReaction>
</comment>
<comment type="subunit">
    <text evidence="2">Core subunit of respiratory chain NADH dehydrogenase (Complex I) which is composed of 45 different subunits.</text>
</comment>
<comment type="subcellular location">
    <subcellularLocation>
        <location evidence="2">Mitochondrion inner membrane</location>
        <topology evidence="3">Multi-pass membrane protein</topology>
    </subcellularLocation>
</comment>
<comment type="similarity">
    <text evidence="4">Belongs to the complex I subunit 4L family.</text>
</comment>
<geneLocation type="mitochondrion"/>
<reference key="1">
    <citation type="journal article" date="1997" name="Proc. Natl. Acad. Sci. U.S.A.">
        <title>The complete mitochondrial genome of the wallaroo (Macropus robustus) and the phylogenetic relationship among Monotremata, Marsupialia, and Eutheria.</title>
        <authorList>
            <person name="Janke A."/>
            <person name="Xu X."/>
            <person name="Arnason U."/>
        </authorList>
    </citation>
    <scope>NUCLEOTIDE SEQUENCE [GENOMIC DNA]</scope>
</reference>
<gene>
    <name type="primary">MT-ND4L</name>
    <name type="synonym">MTND4L</name>
    <name type="synonym">NADH4L</name>
    <name type="synonym">ND4L</name>
</gene>
<dbReference type="EC" id="7.1.1.2"/>
<dbReference type="EMBL" id="Y10524">
    <property type="protein sequence ID" value="CAA71544.1"/>
    <property type="molecule type" value="Genomic_DNA"/>
</dbReference>
<dbReference type="PIR" id="T11436">
    <property type="entry name" value="T11436"/>
</dbReference>
<dbReference type="RefSeq" id="NP_007402.1">
    <property type="nucleotide sequence ID" value="NC_001794.1"/>
</dbReference>
<dbReference type="SMR" id="P92667"/>
<dbReference type="GeneID" id="808070"/>
<dbReference type="CTD" id="4539"/>
<dbReference type="GO" id="GO:0005743">
    <property type="term" value="C:mitochondrial inner membrane"/>
    <property type="evidence" value="ECO:0000250"/>
    <property type="project" value="UniProtKB"/>
</dbReference>
<dbReference type="GO" id="GO:0045271">
    <property type="term" value="C:respiratory chain complex I"/>
    <property type="evidence" value="ECO:0000250"/>
    <property type="project" value="UniProtKB"/>
</dbReference>
<dbReference type="GO" id="GO:0008137">
    <property type="term" value="F:NADH dehydrogenase (ubiquinone) activity"/>
    <property type="evidence" value="ECO:0000250"/>
    <property type="project" value="UniProtKB"/>
</dbReference>
<dbReference type="GO" id="GO:0042773">
    <property type="term" value="P:ATP synthesis coupled electron transport"/>
    <property type="evidence" value="ECO:0007669"/>
    <property type="project" value="InterPro"/>
</dbReference>
<dbReference type="FunFam" id="1.10.287.3510:FF:000002">
    <property type="entry name" value="NADH-ubiquinone oxidoreductase chain 4L"/>
    <property type="match status" value="1"/>
</dbReference>
<dbReference type="Gene3D" id="1.10.287.3510">
    <property type="match status" value="1"/>
</dbReference>
<dbReference type="InterPro" id="IPR001133">
    <property type="entry name" value="NADH_UbQ_OxRdtase_chain4L/K"/>
</dbReference>
<dbReference type="InterPro" id="IPR039428">
    <property type="entry name" value="NUOK/Mnh_C1-like"/>
</dbReference>
<dbReference type="PANTHER" id="PTHR11434:SF0">
    <property type="entry name" value="NADH-UBIQUINONE OXIDOREDUCTASE CHAIN 4L"/>
    <property type="match status" value="1"/>
</dbReference>
<dbReference type="PANTHER" id="PTHR11434">
    <property type="entry name" value="NADH-UBIQUINONE OXIDOREDUCTASE SUBUNIT ND4L"/>
    <property type="match status" value="1"/>
</dbReference>
<dbReference type="Pfam" id="PF00420">
    <property type="entry name" value="Oxidored_q2"/>
    <property type="match status" value="1"/>
</dbReference>
<keyword id="KW-0249">Electron transport</keyword>
<keyword id="KW-0472">Membrane</keyword>
<keyword id="KW-0496">Mitochondrion</keyword>
<keyword id="KW-0999">Mitochondrion inner membrane</keyword>
<keyword id="KW-0520">NAD</keyword>
<keyword id="KW-0679">Respiratory chain</keyword>
<keyword id="KW-1278">Translocase</keyword>
<keyword id="KW-0812">Transmembrane</keyword>
<keyword id="KW-1133">Transmembrane helix</keyword>
<keyword id="KW-0813">Transport</keyword>
<keyword id="KW-0830">Ubiquinone</keyword>
<evidence type="ECO:0000250" key="1">
    <source>
        <dbReference type="UniProtKB" id="P03901"/>
    </source>
</evidence>
<evidence type="ECO:0000250" key="2">
    <source>
        <dbReference type="UniProtKB" id="P03902"/>
    </source>
</evidence>
<evidence type="ECO:0000255" key="3"/>
<evidence type="ECO:0000305" key="4"/>
<organism>
    <name type="scientific">Osphranter robustus</name>
    <name type="common">Wallaroo</name>
    <name type="synonym">Macropus robustus</name>
    <dbReference type="NCBI Taxonomy" id="9319"/>
    <lineage>
        <taxon>Eukaryota</taxon>
        <taxon>Metazoa</taxon>
        <taxon>Chordata</taxon>
        <taxon>Craniata</taxon>
        <taxon>Vertebrata</taxon>
        <taxon>Euteleostomi</taxon>
        <taxon>Mammalia</taxon>
        <taxon>Metatheria</taxon>
        <taxon>Diprotodontia</taxon>
        <taxon>Macropodidae</taxon>
        <taxon>Osphranter</taxon>
    </lineage>
</organism>
<feature type="chain" id="PRO_0000118444" description="NADH-ubiquinone oxidoreductase chain 4L">
    <location>
        <begin position="1"/>
        <end position="98"/>
    </location>
</feature>
<feature type="transmembrane region" description="Helical" evidence="3">
    <location>
        <begin position="1"/>
        <end position="21"/>
    </location>
</feature>
<feature type="transmembrane region" description="Helical" evidence="3">
    <location>
        <begin position="28"/>
        <end position="48"/>
    </location>
</feature>
<feature type="transmembrane region" description="Helical" evidence="3">
    <location>
        <begin position="59"/>
        <end position="79"/>
    </location>
</feature>
<protein>
    <recommendedName>
        <fullName>NADH-ubiquinone oxidoreductase chain 4L</fullName>
        <ecNumber>7.1.1.2</ecNumber>
    </recommendedName>
    <alternativeName>
        <fullName>NADH dehydrogenase subunit 4L</fullName>
    </alternativeName>
</protein>